<sequence>MKTFVLHIFIFALVAFASASRDSARKIGSQYDNYATCLAEHSLTEDDIFSIGEVSSGQHKTNHEDTELHKNGCVMQCLLEKDGLMSGADYDEEKMREDYIKETGAQPGDQRIEALNACMQETKDMEDKCDKSLLLVACVLAAEAVLADSNEGA</sequence>
<comment type="function">
    <text evidence="3">Colony queen number, a major feature of social organization, is associated with worker genotype for Gp-9. Colonies are headed by either a single reproductive queen (monogyne form) or multiple queens (polygyne form). Differences in worker Gp-9 genotypes between social forms may cause differences in workers' abilities to recognize queens and regulate their numbers (By similarity).</text>
</comment>
<comment type="subunit">
    <text evidence="2">Homodimer.</text>
</comment>
<comment type="subcellular location">
    <subcellularLocation>
        <location evidence="1">Secreted</location>
    </subcellularLocation>
</comment>
<comment type="polymorphism">
    <text evidence="5">Allele B is shown, polygyne population from Argentina.</text>
</comment>
<comment type="similarity">
    <text evidence="4">Belongs to the PBP/GOBP family.</text>
</comment>
<reference evidence="6 7" key="1">
    <citation type="journal article" date="2002" name="Science">
        <title>Identification of a major gene regulating complex social behavior.</title>
        <authorList>
            <person name="Krieger M.J.B."/>
            <person name="Ross K.G."/>
        </authorList>
    </citation>
    <scope>NUCLEOTIDE SEQUENCE [GENOMIC DNA] (ALLELES B AND B')</scope>
    <scope>VARIANTS THR-39; GLY-42; ASP-45; ILE-95; ALA-136; ILE-139 AND ALA-152</scope>
</reference>
<reference evidence="9" key="2">
    <citation type="journal article" date="2007" name="PLoS ONE">
        <title>Molecular variation at a candidate gene implicated in the regulation of fire ant social behavior.</title>
        <authorList>
            <person name="Gotzek D."/>
            <person name="Shoemaker D.D."/>
            <person name="Ross K.G."/>
        </authorList>
    </citation>
    <scope>NUCLEOTIDE SEQUENCE [GENOMIC DNA]</scope>
    <source>
        <strain evidence="8">Pi-80</strain>
        <strain evidence="9">Pu-37</strain>
    </source>
</reference>
<dbReference type="EMBL" id="AF427895">
    <property type="protein sequence ID" value="AAL51121.1"/>
    <property type="molecule type" value="Genomic_DNA"/>
</dbReference>
<dbReference type="EMBL" id="AF427901">
    <property type="protein sequence ID" value="AAL51127.1"/>
    <property type="molecule type" value="Genomic_DNA"/>
</dbReference>
<dbReference type="EMBL" id="EU220054">
    <property type="protein sequence ID" value="ABX25633.1"/>
    <property type="molecule type" value="Genomic_DNA"/>
</dbReference>
<dbReference type="EMBL" id="EU220055">
    <property type="protein sequence ID" value="ABX25634.1"/>
    <property type="molecule type" value="Genomic_DNA"/>
</dbReference>
<dbReference type="SMR" id="A9LKF6"/>
<dbReference type="GO" id="GO:0005615">
    <property type="term" value="C:extracellular space"/>
    <property type="evidence" value="ECO:0000250"/>
    <property type="project" value="UniProtKB"/>
</dbReference>
<dbReference type="GO" id="GO:0005550">
    <property type="term" value="F:pheromone binding"/>
    <property type="evidence" value="ECO:0007669"/>
    <property type="project" value="UniProtKB-KW"/>
</dbReference>
<dbReference type="GO" id="GO:0019236">
    <property type="term" value="P:response to pheromone"/>
    <property type="evidence" value="ECO:0007669"/>
    <property type="project" value="UniProtKB-KW"/>
</dbReference>
<dbReference type="GO" id="GO:0035176">
    <property type="term" value="P:social behavior"/>
    <property type="evidence" value="ECO:0000250"/>
    <property type="project" value="UniProtKB"/>
</dbReference>
<dbReference type="CDD" id="cd23992">
    <property type="entry name" value="PBP_GOBP"/>
    <property type="match status" value="1"/>
</dbReference>
<dbReference type="FunFam" id="1.10.238.20:FF:000004">
    <property type="entry name" value="Pheromone-binding protein Gp-9"/>
    <property type="match status" value="1"/>
</dbReference>
<dbReference type="Gene3D" id="1.10.238.20">
    <property type="entry name" value="Pheromone/general odorant binding protein domain"/>
    <property type="match status" value="1"/>
</dbReference>
<dbReference type="InterPro" id="IPR006170">
    <property type="entry name" value="PBP/GOBP"/>
</dbReference>
<dbReference type="InterPro" id="IPR036728">
    <property type="entry name" value="PBP_GOBP_sf"/>
</dbReference>
<dbReference type="InterPro" id="IPR022354">
    <property type="entry name" value="Pheromone-bd_protein_Gp-9"/>
</dbReference>
<dbReference type="Pfam" id="PF01395">
    <property type="entry name" value="PBP_GOBP"/>
    <property type="match status" value="1"/>
</dbReference>
<dbReference type="PRINTS" id="PR02007">
    <property type="entry name" value="ODORANTBPGP9"/>
</dbReference>
<dbReference type="SUPFAM" id="SSF47565">
    <property type="entry name" value="Insect pheromone/odorant-binding proteins"/>
    <property type="match status" value="1"/>
</dbReference>
<gene>
    <name evidence="7" type="primary">Gp-9</name>
</gene>
<name>PBGP9_SOLMC</name>
<keyword id="KW-0085">Behavior</keyword>
<keyword id="KW-1015">Disulfide bond</keyword>
<keyword id="KW-0589">Pheromone response</keyword>
<keyword id="KW-0590">Pheromone-binding</keyword>
<keyword id="KW-0964">Secreted</keyword>
<keyword id="KW-0732">Signal</keyword>
<keyword id="KW-0813">Transport</keyword>
<evidence type="ECO:0000250" key="1"/>
<evidence type="ECO:0000250" key="2">
    <source>
        <dbReference type="UniProtKB" id="P20797"/>
    </source>
</evidence>
<evidence type="ECO:0000250" key="3">
    <source>
        <dbReference type="UniProtKB" id="Q8WP90"/>
    </source>
</evidence>
<evidence type="ECO:0000255" key="4"/>
<evidence type="ECO:0000269" key="5">
    <source>
    </source>
</evidence>
<evidence type="ECO:0000305" key="6"/>
<evidence type="ECO:0000312" key="7">
    <source>
        <dbReference type="EMBL" id="AAL51121.1"/>
    </source>
</evidence>
<evidence type="ECO:0000312" key="8">
    <source>
        <dbReference type="EMBL" id="ABX25633.1"/>
    </source>
</evidence>
<evidence type="ECO:0000312" key="9">
    <source>
        <dbReference type="EMBL" id="ABX25634.1"/>
    </source>
</evidence>
<feature type="signal peptide" evidence="3">
    <location>
        <begin position="1"/>
        <end position="19"/>
    </location>
</feature>
<feature type="chain" id="PRO_5000061697" description="Pheromone-binding protein Gp-9" evidence="3">
    <location>
        <begin position="20"/>
        <end position="153"/>
    </location>
</feature>
<feature type="disulfide bond" evidence="2">
    <location>
        <begin position="37"/>
        <end position="77"/>
    </location>
</feature>
<feature type="disulfide bond" evidence="2">
    <location>
        <begin position="73"/>
        <end position="129"/>
    </location>
</feature>
<feature type="disulfide bond" evidence="2">
    <location>
        <begin position="118"/>
        <end position="138"/>
    </location>
</feature>
<feature type="sequence variant" description="In allele b'." evidence="5">
    <original>A</original>
    <variation>T</variation>
    <location>
        <position position="39"/>
    </location>
</feature>
<feature type="sequence variant" description="In allele b'." evidence="5">
    <original>S</original>
    <variation>G</variation>
    <location>
        <position position="42"/>
    </location>
</feature>
<feature type="sequence variant" description="In allele b'." evidence="5">
    <original>E</original>
    <variation>D</variation>
    <location>
        <position position="45"/>
    </location>
</feature>
<feature type="sequence variant" description="In allele b'." evidence="5">
    <original>M</original>
    <variation>I</variation>
    <location>
        <position position="95"/>
    </location>
</feature>
<feature type="sequence variant" description="In allele b'." evidence="5">
    <original>V</original>
    <variation>A</variation>
    <location>
        <position position="136"/>
    </location>
</feature>
<feature type="sequence variant" description="In allele b'." evidence="5">
    <original>V</original>
    <variation>I</variation>
    <location>
        <position position="139"/>
    </location>
</feature>
<feature type="sequence variant" description="In allele b'." evidence="5">
    <original>G</original>
    <variation>A</variation>
    <location>
        <position position="152"/>
    </location>
</feature>
<organism>
    <name type="scientific">Solenopsis macdonaghi</name>
    <name type="common">Fire ant</name>
    <dbReference type="NCBI Taxonomy" id="176595"/>
    <lineage>
        <taxon>Eukaryota</taxon>
        <taxon>Metazoa</taxon>
        <taxon>Ecdysozoa</taxon>
        <taxon>Arthropoda</taxon>
        <taxon>Hexapoda</taxon>
        <taxon>Insecta</taxon>
        <taxon>Pterygota</taxon>
        <taxon>Neoptera</taxon>
        <taxon>Endopterygota</taxon>
        <taxon>Hymenoptera</taxon>
        <taxon>Apocrita</taxon>
        <taxon>Aculeata</taxon>
        <taxon>Formicoidea</taxon>
        <taxon>Formicidae</taxon>
        <taxon>Myrmicinae</taxon>
        <taxon>Solenopsis</taxon>
    </lineage>
</organism>
<protein>
    <recommendedName>
        <fullName>Pheromone-binding protein Gp-9</fullName>
        <shortName>PBP</shortName>
    </recommendedName>
    <alternativeName>
        <fullName>Putative odorant-binding protein Gp-9</fullName>
    </alternativeName>
</protein>
<accession>A9LKF6</accession>
<accession>A9LKF5</accession>
<accession>Q7KF15</accession>
<accession>Q8WRQ1</accession>
<proteinExistence type="inferred from homology"/>